<accession>B0RT13</accession>
<comment type="function">
    <text evidence="1">Assembles around the rod to form the L-ring and probably protects the motor/basal body from shearing forces during rotation.</text>
</comment>
<comment type="subunit">
    <text evidence="1">The basal body constitutes a major portion of the flagellar organelle and consists of four rings (L,P,S, and M) mounted on a central rod.</text>
</comment>
<comment type="subcellular location">
    <subcellularLocation>
        <location evidence="1">Cell outer membrane</location>
        <topology evidence="1">Lipid-anchor</topology>
    </subcellularLocation>
    <subcellularLocation>
        <location evidence="1">Bacterial flagellum basal body</location>
    </subcellularLocation>
</comment>
<comment type="similarity">
    <text evidence="1">Belongs to the FlgH family.</text>
</comment>
<protein>
    <recommendedName>
        <fullName evidence="1">Flagellar L-ring protein</fullName>
    </recommendedName>
    <alternativeName>
        <fullName evidence="1">Basal body L-ring protein</fullName>
    </alternativeName>
</protein>
<dbReference type="EMBL" id="AM920689">
    <property type="protein sequence ID" value="CAP51599.1"/>
    <property type="molecule type" value="Genomic_DNA"/>
</dbReference>
<dbReference type="SMR" id="B0RT13"/>
<dbReference type="KEGG" id="xca:xcc-b100_2244"/>
<dbReference type="HOGENOM" id="CLU_069313_0_1_6"/>
<dbReference type="Proteomes" id="UP000001188">
    <property type="component" value="Chromosome"/>
</dbReference>
<dbReference type="GO" id="GO:0009427">
    <property type="term" value="C:bacterial-type flagellum basal body, distal rod, L ring"/>
    <property type="evidence" value="ECO:0007669"/>
    <property type="project" value="InterPro"/>
</dbReference>
<dbReference type="GO" id="GO:0009279">
    <property type="term" value="C:cell outer membrane"/>
    <property type="evidence" value="ECO:0007669"/>
    <property type="project" value="UniProtKB-SubCell"/>
</dbReference>
<dbReference type="GO" id="GO:0003774">
    <property type="term" value="F:cytoskeletal motor activity"/>
    <property type="evidence" value="ECO:0007669"/>
    <property type="project" value="InterPro"/>
</dbReference>
<dbReference type="GO" id="GO:0071973">
    <property type="term" value="P:bacterial-type flagellum-dependent cell motility"/>
    <property type="evidence" value="ECO:0007669"/>
    <property type="project" value="InterPro"/>
</dbReference>
<dbReference type="HAMAP" id="MF_00415">
    <property type="entry name" value="FlgH"/>
    <property type="match status" value="1"/>
</dbReference>
<dbReference type="InterPro" id="IPR000527">
    <property type="entry name" value="Flag_Lring"/>
</dbReference>
<dbReference type="NCBIfam" id="NF001304">
    <property type="entry name" value="PRK00249.1-4"/>
    <property type="match status" value="1"/>
</dbReference>
<dbReference type="PANTHER" id="PTHR34933">
    <property type="entry name" value="FLAGELLAR L-RING PROTEIN"/>
    <property type="match status" value="1"/>
</dbReference>
<dbReference type="PANTHER" id="PTHR34933:SF1">
    <property type="entry name" value="FLAGELLAR L-RING PROTEIN"/>
    <property type="match status" value="1"/>
</dbReference>
<dbReference type="Pfam" id="PF02107">
    <property type="entry name" value="FlgH"/>
    <property type="match status" value="1"/>
</dbReference>
<dbReference type="PRINTS" id="PR01008">
    <property type="entry name" value="FLGLRINGFLGH"/>
</dbReference>
<dbReference type="PROSITE" id="PS51257">
    <property type="entry name" value="PROKAR_LIPOPROTEIN"/>
    <property type="match status" value="1"/>
</dbReference>
<proteinExistence type="inferred from homology"/>
<evidence type="ECO:0000255" key="1">
    <source>
        <dbReference type="HAMAP-Rule" id="MF_00415"/>
    </source>
</evidence>
<feature type="signal peptide" evidence="1">
    <location>
        <begin position="1"/>
        <end position="15"/>
    </location>
</feature>
<feature type="chain" id="PRO_1000123964" description="Flagellar L-ring protein">
    <location>
        <begin position="16"/>
        <end position="230"/>
    </location>
</feature>
<feature type="lipid moiety-binding region" description="N-palmitoyl cysteine" evidence="1">
    <location>
        <position position="16"/>
    </location>
</feature>
<feature type="lipid moiety-binding region" description="S-diacylglycerol cysteine" evidence="1">
    <location>
        <position position="16"/>
    </location>
</feature>
<organism>
    <name type="scientific">Xanthomonas campestris pv. campestris (strain B100)</name>
    <dbReference type="NCBI Taxonomy" id="509169"/>
    <lineage>
        <taxon>Bacteria</taxon>
        <taxon>Pseudomonadati</taxon>
        <taxon>Pseudomonadota</taxon>
        <taxon>Gammaproteobacteria</taxon>
        <taxon>Lysobacterales</taxon>
        <taxon>Lysobacteraceae</taxon>
        <taxon>Xanthomonas</taxon>
    </lineage>
</organism>
<keyword id="KW-0975">Bacterial flagellum</keyword>
<keyword id="KW-0998">Cell outer membrane</keyword>
<keyword id="KW-0449">Lipoprotein</keyword>
<keyword id="KW-0472">Membrane</keyword>
<keyword id="KW-0564">Palmitate</keyword>
<keyword id="KW-0732">Signal</keyword>
<gene>
    <name evidence="1" type="primary">flgH</name>
    <name type="ordered locus">xcc-b100_2244</name>
</gene>
<sequence length="230" mass="23843">MSRLPSLSSLCLAIACSALLGGCVAAGDVRPFAELAPIVPVVAPVAQPTAGAIYAAGPSLNLYGDRRARDVGDLLTVNLVENTTASSTANTSISKADTVDMSTPTLLGVPLTVNGIDVLRNSTSGDRSFDGKGNTAQSNRMQGSVTVTVMQRLPNGNLVIQGQKNLRLTQGDELVQVQGIVRAADIAPDNSVPSSKVADARIAYGGRGAIAQSNAMGWLSRFFNSRLSPY</sequence>
<name>FLGH_XANCB</name>
<reference key="1">
    <citation type="journal article" date="2008" name="J. Biotechnol.">
        <title>The genome of Xanthomonas campestris pv. campestris B100 and its use for the reconstruction of metabolic pathways involved in xanthan biosynthesis.</title>
        <authorList>
            <person name="Vorhoelter F.-J."/>
            <person name="Schneiker S."/>
            <person name="Goesmann A."/>
            <person name="Krause L."/>
            <person name="Bekel T."/>
            <person name="Kaiser O."/>
            <person name="Linke B."/>
            <person name="Patschkowski T."/>
            <person name="Rueckert C."/>
            <person name="Schmid J."/>
            <person name="Sidhu V.K."/>
            <person name="Sieber V."/>
            <person name="Tauch A."/>
            <person name="Watt S.A."/>
            <person name="Weisshaar B."/>
            <person name="Becker A."/>
            <person name="Niehaus K."/>
            <person name="Puehler A."/>
        </authorList>
    </citation>
    <scope>NUCLEOTIDE SEQUENCE [LARGE SCALE GENOMIC DNA]</scope>
    <source>
        <strain>B100</strain>
    </source>
</reference>